<gene>
    <name evidence="1" type="primary">miaA</name>
    <name type="ordered locus">MW1186</name>
</gene>
<feature type="chain" id="PRO_0000163977" description="tRNA dimethylallyltransferase">
    <location>
        <begin position="1"/>
        <end position="311"/>
    </location>
</feature>
<feature type="region of interest" description="Interaction with substrate tRNA" evidence="1">
    <location>
        <begin position="38"/>
        <end position="41"/>
    </location>
</feature>
<feature type="region of interest" description="Interaction with substrate tRNA" evidence="1">
    <location>
        <begin position="166"/>
        <end position="170"/>
    </location>
</feature>
<feature type="binding site" evidence="1">
    <location>
        <begin position="13"/>
        <end position="20"/>
    </location>
    <ligand>
        <name>ATP</name>
        <dbReference type="ChEBI" id="CHEBI:30616"/>
    </ligand>
</feature>
<feature type="binding site" evidence="1">
    <location>
        <begin position="15"/>
        <end position="20"/>
    </location>
    <ligand>
        <name>substrate</name>
    </ligand>
</feature>
<feature type="site" description="Interaction with substrate tRNA" evidence="1">
    <location>
        <position position="104"/>
    </location>
</feature>
<reference key="1">
    <citation type="journal article" date="2002" name="Lancet">
        <title>Genome and virulence determinants of high virulence community-acquired MRSA.</title>
        <authorList>
            <person name="Baba T."/>
            <person name="Takeuchi F."/>
            <person name="Kuroda M."/>
            <person name="Yuzawa H."/>
            <person name="Aoki K."/>
            <person name="Oguchi A."/>
            <person name="Nagai Y."/>
            <person name="Iwama N."/>
            <person name="Asano K."/>
            <person name="Naimi T."/>
            <person name="Kuroda H."/>
            <person name="Cui L."/>
            <person name="Yamamoto K."/>
            <person name="Hiramatsu K."/>
        </authorList>
    </citation>
    <scope>NUCLEOTIDE SEQUENCE [LARGE SCALE GENOMIC DNA]</scope>
    <source>
        <strain>MW2</strain>
    </source>
</reference>
<comment type="function">
    <text evidence="1">Catalyzes the transfer of a dimethylallyl group onto the adenine at position 37 in tRNAs that read codons beginning with uridine, leading to the formation of N6-(dimethylallyl)adenosine (i(6)A).</text>
</comment>
<comment type="catalytic activity">
    <reaction evidence="1">
        <text>adenosine(37) in tRNA + dimethylallyl diphosphate = N(6)-dimethylallyladenosine(37) in tRNA + diphosphate</text>
        <dbReference type="Rhea" id="RHEA:26482"/>
        <dbReference type="Rhea" id="RHEA-COMP:10162"/>
        <dbReference type="Rhea" id="RHEA-COMP:10375"/>
        <dbReference type="ChEBI" id="CHEBI:33019"/>
        <dbReference type="ChEBI" id="CHEBI:57623"/>
        <dbReference type="ChEBI" id="CHEBI:74411"/>
        <dbReference type="ChEBI" id="CHEBI:74415"/>
        <dbReference type="EC" id="2.5.1.75"/>
    </reaction>
</comment>
<comment type="cofactor">
    <cofactor evidence="1">
        <name>Mg(2+)</name>
        <dbReference type="ChEBI" id="CHEBI:18420"/>
    </cofactor>
</comment>
<comment type="subunit">
    <text evidence="1">Monomer.</text>
</comment>
<comment type="similarity">
    <text evidence="1">Belongs to the IPP transferase family.</text>
</comment>
<organism>
    <name type="scientific">Staphylococcus aureus (strain MW2)</name>
    <dbReference type="NCBI Taxonomy" id="196620"/>
    <lineage>
        <taxon>Bacteria</taxon>
        <taxon>Bacillati</taxon>
        <taxon>Bacillota</taxon>
        <taxon>Bacilli</taxon>
        <taxon>Bacillales</taxon>
        <taxon>Staphylococcaceae</taxon>
        <taxon>Staphylococcus</taxon>
    </lineage>
</organism>
<keyword id="KW-0067">ATP-binding</keyword>
<keyword id="KW-0460">Magnesium</keyword>
<keyword id="KW-0547">Nucleotide-binding</keyword>
<keyword id="KW-0808">Transferase</keyword>
<keyword id="KW-0819">tRNA processing</keyword>
<proteinExistence type="inferred from homology"/>
<evidence type="ECO:0000255" key="1">
    <source>
        <dbReference type="HAMAP-Rule" id="MF_00185"/>
    </source>
</evidence>
<name>MIAA_STAAW</name>
<dbReference type="EC" id="2.5.1.75" evidence="1"/>
<dbReference type="EMBL" id="BA000033">
    <property type="protein sequence ID" value="BAB95051.1"/>
    <property type="molecule type" value="Genomic_DNA"/>
</dbReference>
<dbReference type="RefSeq" id="WP_001548613.1">
    <property type="nucleotide sequence ID" value="NC_003923.1"/>
</dbReference>
<dbReference type="SMR" id="P65356"/>
<dbReference type="KEGG" id="sam:MW1186"/>
<dbReference type="HOGENOM" id="CLU_032616_0_1_9"/>
<dbReference type="GO" id="GO:0005524">
    <property type="term" value="F:ATP binding"/>
    <property type="evidence" value="ECO:0007669"/>
    <property type="project" value="UniProtKB-UniRule"/>
</dbReference>
<dbReference type="GO" id="GO:0052381">
    <property type="term" value="F:tRNA dimethylallyltransferase activity"/>
    <property type="evidence" value="ECO:0007669"/>
    <property type="project" value="UniProtKB-UniRule"/>
</dbReference>
<dbReference type="GO" id="GO:0006400">
    <property type="term" value="P:tRNA modification"/>
    <property type="evidence" value="ECO:0007669"/>
    <property type="project" value="TreeGrafter"/>
</dbReference>
<dbReference type="FunFam" id="1.10.20.140:FF:000004">
    <property type="entry name" value="tRNA dimethylallyltransferase"/>
    <property type="match status" value="1"/>
</dbReference>
<dbReference type="Gene3D" id="1.10.20.140">
    <property type="match status" value="1"/>
</dbReference>
<dbReference type="Gene3D" id="3.40.50.300">
    <property type="entry name" value="P-loop containing nucleotide triphosphate hydrolases"/>
    <property type="match status" value="1"/>
</dbReference>
<dbReference type="HAMAP" id="MF_00185">
    <property type="entry name" value="IPP_trans"/>
    <property type="match status" value="1"/>
</dbReference>
<dbReference type="InterPro" id="IPR039657">
    <property type="entry name" value="Dimethylallyltransferase"/>
</dbReference>
<dbReference type="InterPro" id="IPR018022">
    <property type="entry name" value="IPT"/>
</dbReference>
<dbReference type="InterPro" id="IPR027417">
    <property type="entry name" value="P-loop_NTPase"/>
</dbReference>
<dbReference type="NCBIfam" id="TIGR00174">
    <property type="entry name" value="miaA"/>
    <property type="match status" value="1"/>
</dbReference>
<dbReference type="PANTHER" id="PTHR11088">
    <property type="entry name" value="TRNA DIMETHYLALLYLTRANSFERASE"/>
    <property type="match status" value="1"/>
</dbReference>
<dbReference type="PANTHER" id="PTHR11088:SF60">
    <property type="entry name" value="TRNA DIMETHYLALLYLTRANSFERASE"/>
    <property type="match status" value="1"/>
</dbReference>
<dbReference type="Pfam" id="PF01715">
    <property type="entry name" value="IPPT"/>
    <property type="match status" value="1"/>
</dbReference>
<dbReference type="SUPFAM" id="SSF52540">
    <property type="entry name" value="P-loop containing nucleoside triphosphate hydrolases"/>
    <property type="match status" value="2"/>
</dbReference>
<accession>P65356</accession>
<accession>Q99UH0</accession>
<protein>
    <recommendedName>
        <fullName evidence="1">tRNA dimethylallyltransferase</fullName>
        <ecNumber evidence="1">2.5.1.75</ecNumber>
    </recommendedName>
    <alternativeName>
        <fullName evidence="1">Dimethylallyl diphosphate:tRNA dimethylallyltransferase</fullName>
        <shortName evidence="1">DMAPP:tRNA dimethylallyltransferase</shortName>
        <shortName evidence="1">DMATase</shortName>
    </alternativeName>
    <alternativeName>
        <fullName evidence="1">Isopentenyl-diphosphate:tRNA isopentenyltransferase</fullName>
        <shortName evidence="1">IPP transferase</shortName>
        <shortName evidence="1">IPPT</shortName>
        <shortName evidence="1">IPTase</shortName>
    </alternativeName>
</protein>
<sequence>MNKNKPFIVVIVGPTASGKTELSIELAKRINGEIISGDSMQVYKHMNIGTAKVTPEEMDGIPHHLIDILNPDDTFSAYEFKRLAEDLITDITNRGKVPIIAGGTGLYIQSLIYNYELEDETVTPAQLSIVKQKLSALEHLDNQQLHDYLAQFDAVSAENIHPNNRQRVLRAIEYYLKTKKLLSNRKKVQQFTENYDTLLLGIEMSRKTLYSRINKRVDIMLDHGLFREVQQLVEQGYESCQSMQAIGYKELIPVINGQMIYEDAVNDLKQHSRQYAKRQMTWFKNKMSVHWLDKENMSLQMMLDEITTQIK</sequence>